<protein>
    <recommendedName>
        <fullName>Anther-specific protein LAT52</fullName>
    </recommendedName>
</protein>
<feature type="signal peptide" evidence="2">
    <location>
        <begin position="1"/>
        <end position="17"/>
    </location>
</feature>
<feature type="chain" id="PRO_0000020072" description="Anther-specific protein LAT52">
    <location>
        <begin position="18"/>
        <end position="161"/>
    </location>
</feature>
<feature type="glycosylation site" description="N-linked (GlcNAc...) asparagine" evidence="2">
    <location>
        <position position="61"/>
    </location>
</feature>
<feature type="disulfide bond" evidence="1">
    <location>
        <begin position="35"/>
        <end position="106"/>
    </location>
</feature>
<feature type="disulfide bond" evidence="1">
    <location>
        <begin position="38"/>
        <end position="147"/>
    </location>
</feature>
<feature type="disulfide bond" evidence="1">
    <location>
        <begin position="59"/>
        <end position="94"/>
    </location>
</feature>
<comment type="function">
    <text>May play a role during germination or early tube growth.</text>
</comment>
<comment type="tissue specificity">
    <text>Expressed in anthers and pollen.</text>
</comment>
<comment type="similarity">
    <text evidence="3">Belongs to the Ole e I family.</text>
</comment>
<evidence type="ECO:0000250" key="1"/>
<evidence type="ECO:0000255" key="2"/>
<evidence type="ECO:0000305" key="3"/>
<reference key="1">
    <citation type="journal article" date="1989" name="Mol. Gen. Genet.">
        <title>Isolation and expression of an anther-specific gene from tomato.</title>
        <authorList>
            <person name="Twell D."/>
            <person name="Wing R."/>
            <person name="Yamaguchi J."/>
            <person name="McCormick S."/>
        </authorList>
    </citation>
    <scope>NUCLEOTIDE SEQUENCE [GENOMIC DNA]</scope>
    <source>
        <strain>cv. VF36</strain>
    </source>
</reference>
<accession>P13447</accession>
<proteinExistence type="evidence at transcript level"/>
<sequence length="161" mass="17834">MAKAIVLLSALCILALANFAHCRPEVFDVEGKVYCDTCRVQFETKLSENLEGATVKLQCRNISTEAETFSVEGVTDKDGKYKLTVNGDHENDICEVTVVKSPREDCKESVSGYEKARIECSDNVGIHNAVRFANPLFFMKAESVQGCKEALDELGLFPLEF</sequence>
<gene>
    <name type="primary">LAT52</name>
</gene>
<organism>
    <name type="scientific">Solanum lycopersicum</name>
    <name type="common">Tomato</name>
    <name type="synonym">Lycopersicon esculentum</name>
    <dbReference type="NCBI Taxonomy" id="4081"/>
    <lineage>
        <taxon>Eukaryota</taxon>
        <taxon>Viridiplantae</taxon>
        <taxon>Streptophyta</taxon>
        <taxon>Embryophyta</taxon>
        <taxon>Tracheophyta</taxon>
        <taxon>Spermatophyta</taxon>
        <taxon>Magnoliopsida</taxon>
        <taxon>eudicotyledons</taxon>
        <taxon>Gunneridae</taxon>
        <taxon>Pentapetalae</taxon>
        <taxon>asterids</taxon>
        <taxon>lamiids</taxon>
        <taxon>Solanales</taxon>
        <taxon>Solanaceae</taxon>
        <taxon>Solanoideae</taxon>
        <taxon>Solaneae</taxon>
        <taxon>Solanum</taxon>
        <taxon>Solanum subgen. Lycopersicon</taxon>
    </lineage>
</organism>
<name>LAT52_SOLLC</name>
<dbReference type="EMBL" id="X15855">
    <property type="protein sequence ID" value="CAA33854.1"/>
    <property type="molecule type" value="Genomic_DNA"/>
</dbReference>
<dbReference type="PIR" id="S04765">
    <property type="entry name" value="S04765"/>
</dbReference>
<dbReference type="RefSeq" id="NP_001296179.1">
    <property type="nucleotide sequence ID" value="NM_001309250.1"/>
</dbReference>
<dbReference type="SMR" id="P13447"/>
<dbReference type="FunCoup" id="P13447">
    <property type="interactions" value="136"/>
</dbReference>
<dbReference type="STRING" id="4081.P13447"/>
<dbReference type="GlyCosmos" id="P13447">
    <property type="glycosylation" value="1 site, No reported glycans"/>
</dbReference>
<dbReference type="PaxDb" id="4081-Solyc10g007270.2.1"/>
<dbReference type="EnsemblPlants" id="Solyc10g007270.3.1">
    <property type="protein sequence ID" value="Solyc10g007270.3.1"/>
    <property type="gene ID" value="Solyc10g007270.3"/>
</dbReference>
<dbReference type="GeneID" id="101261755"/>
<dbReference type="Gramene" id="Solyc10g007270.3.1">
    <property type="protein sequence ID" value="Solyc10g007270.3.1"/>
    <property type="gene ID" value="Solyc10g007270.3"/>
</dbReference>
<dbReference type="KEGG" id="sly:101261755"/>
<dbReference type="eggNOG" id="ENOG502S2YZ">
    <property type="taxonomic scope" value="Eukaryota"/>
</dbReference>
<dbReference type="HOGENOM" id="CLU_094008_2_1_1"/>
<dbReference type="InParanoid" id="P13447"/>
<dbReference type="OMA" id="RANCNEH"/>
<dbReference type="OrthoDB" id="1888725at2759"/>
<dbReference type="PhylomeDB" id="P13447"/>
<dbReference type="Proteomes" id="UP000004994">
    <property type="component" value="Chromosome 10"/>
</dbReference>
<dbReference type="ExpressionAtlas" id="P13447">
    <property type="expression patterns" value="baseline"/>
</dbReference>
<dbReference type="GO" id="GO:0005615">
    <property type="term" value="C:extracellular space"/>
    <property type="evidence" value="ECO:0007669"/>
    <property type="project" value="InterPro"/>
</dbReference>
<dbReference type="InterPro" id="IPR006040">
    <property type="entry name" value="Allergen_Ole_e_I_CS"/>
</dbReference>
<dbReference type="InterPro" id="IPR006041">
    <property type="entry name" value="Pollen_Ole_e1_allergen"/>
</dbReference>
<dbReference type="PANTHER" id="PTHR31614:SF42">
    <property type="entry name" value="ANTHER-SPECIFIC PROTEIN LAT52"/>
    <property type="match status" value="1"/>
</dbReference>
<dbReference type="PANTHER" id="PTHR31614">
    <property type="entry name" value="PROTEIN DOWNSTREAM OF FLC-RELATED"/>
    <property type="match status" value="1"/>
</dbReference>
<dbReference type="Pfam" id="PF01190">
    <property type="entry name" value="Pollen_Ole_e_1"/>
    <property type="match status" value="1"/>
</dbReference>
<dbReference type="PROSITE" id="PS00925">
    <property type="entry name" value="OLEEI"/>
    <property type="match status" value="1"/>
</dbReference>
<keyword id="KW-1015">Disulfide bond</keyword>
<keyword id="KW-0325">Glycoprotein</keyword>
<keyword id="KW-1185">Reference proteome</keyword>
<keyword id="KW-0732">Signal</keyword>